<reference key="1">
    <citation type="journal article" date="2003" name="Proc. Natl. Acad. Sci. U.S.A.">
        <title>An unusual mechanism of bacterial gene expression revealed for the RNase P protein of Thermus strains.</title>
        <authorList>
            <person name="Feltens R."/>
            <person name="Gossringer M."/>
            <person name="Willkomm D.K."/>
            <person name="Urlaub H."/>
            <person name="Hartmann R.K."/>
        </authorList>
    </citation>
    <scope>NUCLEOTIDE SEQUENCE [GENOMIC DNA]</scope>
    <source>
        <strain>SPS8</strain>
    </source>
</reference>
<accession>Q7X5L1</accession>
<evidence type="ECO:0000255" key="1">
    <source>
        <dbReference type="HAMAP-Rule" id="MF_00391"/>
    </source>
</evidence>
<evidence type="ECO:0000256" key="2">
    <source>
        <dbReference type="SAM" id="MobiDB-lite"/>
    </source>
</evidence>
<evidence type="ECO:0000305" key="3"/>
<gene>
    <name evidence="1" type="primary">rpmH</name>
</gene>
<comment type="subunit">
    <text>Part of the 50S ribosomal subunit.</text>
</comment>
<comment type="miscellaneous">
    <text>The open reading frame (ORF) for this protein is entirely within the ORF for the RNase P protein (RnaP). The two start codons are separated by four nucleotides.</text>
</comment>
<comment type="similarity">
    <text evidence="1">Belongs to the bacterial ribosomal protein bL34 family.</text>
</comment>
<sequence>MKRTWQPNRRKRAKTHGFRARMRTPGGRKVLKRRRQKGRWRLTPRVHR</sequence>
<dbReference type="EMBL" id="AY256340">
    <property type="protein sequence ID" value="AAO88972.1"/>
    <property type="molecule type" value="Genomic_DNA"/>
</dbReference>
<dbReference type="SMR" id="Q7X5L1"/>
<dbReference type="GO" id="GO:1990904">
    <property type="term" value="C:ribonucleoprotein complex"/>
    <property type="evidence" value="ECO:0007669"/>
    <property type="project" value="UniProtKB-KW"/>
</dbReference>
<dbReference type="GO" id="GO:0005840">
    <property type="term" value="C:ribosome"/>
    <property type="evidence" value="ECO:0007669"/>
    <property type="project" value="UniProtKB-KW"/>
</dbReference>
<dbReference type="GO" id="GO:0003735">
    <property type="term" value="F:structural constituent of ribosome"/>
    <property type="evidence" value="ECO:0007669"/>
    <property type="project" value="InterPro"/>
</dbReference>
<dbReference type="GO" id="GO:0006412">
    <property type="term" value="P:translation"/>
    <property type="evidence" value="ECO:0007669"/>
    <property type="project" value="UniProtKB-UniRule"/>
</dbReference>
<dbReference type="FunFam" id="1.10.287.3980:FF:000001">
    <property type="entry name" value="Mitochondrial ribosomal protein L34"/>
    <property type="match status" value="1"/>
</dbReference>
<dbReference type="Gene3D" id="1.10.287.3980">
    <property type="match status" value="1"/>
</dbReference>
<dbReference type="HAMAP" id="MF_00391">
    <property type="entry name" value="Ribosomal_bL34"/>
    <property type="match status" value="1"/>
</dbReference>
<dbReference type="InterPro" id="IPR000271">
    <property type="entry name" value="Ribosomal_bL34"/>
</dbReference>
<dbReference type="InterPro" id="IPR020939">
    <property type="entry name" value="Ribosomal_bL34_CS"/>
</dbReference>
<dbReference type="NCBIfam" id="TIGR01030">
    <property type="entry name" value="rpmH_bact"/>
    <property type="match status" value="1"/>
</dbReference>
<dbReference type="PANTHER" id="PTHR14503:SF4">
    <property type="entry name" value="LARGE RIBOSOMAL SUBUNIT PROTEIN BL34M"/>
    <property type="match status" value="1"/>
</dbReference>
<dbReference type="PANTHER" id="PTHR14503">
    <property type="entry name" value="MITOCHONDRIAL RIBOSOMAL PROTEIN 34 FAMILY MEMBER"/>
    <property type="match status" value="1"/>
</dbReference>
<dbReference type="Pfam" id="PF00468">
    <property type="entry name" value="Ribosomal_L34"/>
    <property type="match status" value="1"/>
</dbReference>
<dbReference type="PROSITE" id="PS00784">
    <property type="entry name" value="RIBOSOMAL_L34"/>
    <property type="match status" value="1"/>
</dbReference>
<name>RL34_THEOS</name>
<organism>
    <name type="scientific">Thermus oshimai</name>
    <dbReference type="NCBI Taxonomy" id="56957"/>
    <lineage>
        <taxon>Bacteria</taxon>
        <taxon>Thermotogati</taxon>
        <taxon>Deinococcota</taxon>
        <taxon>Deinococci</taxon>
        <taxon>Thermales</taxon>
        <taxon>Thermaceae</taxon>
        <taxon>Thermus</taxon>
    </lineage>
</organism>
<protein>
    <recommendedName>
        <fullName evidence="1">Large ribosomal subunit protein bL34</fullName>
    </recommendedName>
    <alternativeName>
        <fullName evidence="3">50S ribosomal protein L34</fullName>
    </alternativeName>
</protein>
<proteinExistence type="inferred from homology"/>
<feature type="chain" id="PRO_0000187491" description="Large ribosomal subunit protein bL34">
    <location>
        <begin position="1"/>
        <end position="48"/>
    </location>
</feature>
<feature type="region of interest" description="Disordered" evidence="2">
    <location>
        <begin position="26"/>
        <end position="48"/>
    </location>
</feature>
<feature type="compositionally biased region" description="Basic residues" evidence="2">
    <location>
        <begin position="29"/>
        <end position="48"/>
    </location>
</feature>
<keyword id="KW-0687">Ribonucleoprotein</keyword>
<keyword id="KW-0689">Ribosomal protein</keyword>